<protein>
    <recommendedName>
        <fullName>Neuropeptides B/W receptor type 2</fullName>
    </recommendedName>
    <alternativeName>
        <fullName>G-protein coupled receptor 8</fullName>
    </alternativeName>
</protein>
<organism>
    <name type="scientific">Homo sapiens</name>
    <name type="common">Human</name>
    <dbReference type="NCBI Taxonomy" id="9606"/>
    <lineage>
        <taxon>Eukaryota</taxon>
        <taxon>Metazoa</taxon>
        <taxon>Chordata</taxon>
        <taxon>Craniata</taxon>
        <taxon>Vertebrata</taxon>
        <taxon>Euteleostomi</taxon>
        <taxon>Mammalia</taxon>
        <taxon>Eutheria</taxon>
        <taxon>Euarchontoglires</taxon>
        <taxon>Primates</taxon>
        <taxon>Haplorrhini</taxon>
        <taxon>Catarrhini</taxon>
        <taxon>Hominidae</taxon>
        <taxon>Homo</taxon>
    </lineage>
</organism>
<accession>P48146</accession>
<accession>Q6NWQ6</accession>
<accession>Q9H4K3</accession>
<gene>
    <name type="primary">NPBWR2</name>
    <name type="synonym">GPR8</name>
</gene>
<sequence length="333" mass="36861">MQAAGHPEPLDSRGSFSLPTMGANVSQDNGTGHNATFSEPLPFLYVLLPAVYSGICAVGLTGNTAVILVILRAPKMKTVTNVFILNLAVADGLFTLVLPVNIAEHLLQYWPFGELLCKLVLAVDHYNIFSSIYFLAVMSVDRYLVVLATVRSRHMPWRTYRGAKVASLCVWLGVTVLVLPFFSFAGVYSNELQVPSCGLSFPWPEQVWFKASRVYTLVLGFVLPVCTICVLYTDLLRRLRAVRLRSGAKALGKARRKVTVLVLVVLAVCLLCWTPFHLASVVALTTDLPQTPLVISMSYVITSLSYANSCLNPFLYAFLDDNFRKNFRSILRC</sequence>
<proteinExistence type="evidence at protein level"/>
<dbReference type="EMBL" id="U22492">
    <property type="protein sequence ID" value="AAC50198.1"/>
    <property type="molecule type" value="Genomic_DNA"/>
</dbReference>
<dbReference type="EMBL" id="AL121581">
    <property type="status" value="NOT_ANNOTATED_CDS"/>
    <property type="molecule type" value="Genomic_DNA"/>
</dbReference>
<dbReference type="EMBL" id="CH471077">
    <property type="protein sequence ID" value="EAW75161.1"/>
    <property type="molecule type" value="Genomic_DNA"/>
</dbReference>
<dbReference type="EMBL" id="BC067481">
    <property type="protein sequence ID" value="AAH67481.1"/>
    <property type="molecule type" value="mRNA"/>
</dbReference>
<dbReference type="EMBL" id="BC067482">
    <property type="protein sequence ID" value="AAH67482.1"/>
    <property type="molecule type" value="mRNA"/>
</dbReference>
<dbReference type="CCDS" id="CCDS13557.1"/>
<dbReference type="PIR" id="I38974">
    <property type="entry name" value="I38974"/>
</dbReference>
<dbReference type="RefSeq" id="NP_005277.2">
    <property type="nucleotide sequence ID" value="NM_005286.2"/>
</dbReference>
<dbReference type="SMR" id="P48146"/>
<dbReference type="BioGRID" id="109093">
    <property type="interactions" value="17"/>
</dbReference>
<dbReference type="FunCoup" id="P48146">
    <property type="interactions" value="624"/>
</dbReference>
<dbReference type="IntAct" id="P48146">
    <property type="interactions" value="15"/>
</dbReference>
<dbReference type="STRING" id="9606.ENSP00000358783"/>
<dbReference type="ChEMBL" id="CHEMBL4523864"/>
<dbReference type="GuidetoPHARMACOLOGY" id="304"/>
<dbReference type="TCDB" id="9.A.14.13.13">
    <property type="family name" value="the g-protein-coupled receptor (gpcr) family"/>
</dbReference>
<dbReference type="GlyCosmos" id="P48146">
    <property type="glycosylation" value="3 sites, No reported glycans"/>
</dbReference>
<dbReference type="GlyGen" id="P48146">
    <property type="glycosylation" value="3 sites"/>
</dbReference>
<dbReference type="iPTMnet" id="P48146"/>
<dbReference type="PhosphoSitePlus" id="P48146"/>
<dbReference type="BioMuta" id="NPBWR2"/>
<dbReference type="MassIVE" id="P48146"/>
<dbReference type="PaxDb" id="9606-ENSP00000358783"/>
<dbReference type="Antibodypedia" id="15539">
    <property type="antibodies" value="118 antibodies from 24 providers"/>
</dbReference>
<dbReference type="DNASU" id="2832"/>
<dbReference type="Ensembl" id="ENST00000369768.1">
    <property type="protein sequence ID" value="ENSP00000358783.1"/>
    <property type="gene ID" value="ENSG00000125522.4"/>
</dbReference>
<dbReference type="Ensembl" id="ENST00000612646.2">
    <property type="protein sequence ID" value="ENSP00000484253.1"/>
    <property type="gene ID" value="ENSG00000277339.2"/>
</dbReference>
<dbReference type="Ensembl" id="ENST00000684052.1">
    <property type="protein sequence ID" value="ENSP00000508236.1"/>
    <property type="gene ID" value="ENSG00000125522.4"/>
</dbReference>
<dbReference type="GeneID" id="2832"/>
<dbReference type="KEGG" id="hsa:2832"/>
<dbReference type="MANE-Select" id="ENST00000684052.1">
    <property type="protein sequence ID" value="ENSP00000508236.1"/>
    <property type="RefSeq nucleotide sequence ID" value="NM_005286.4"/>
    <property type="RefSeq protein sequence ID" value="NP_005277.2"/>
</dbReference>
<dbReference type="UCSC" id="uc011abt.3">
    <property type="organism name" value="human"/>
</dbReference>
<dbReference type="AGR" id="HGNC:4530"/>
<dbReference type="CTD" id="2832"/>
<dbReference type="DisGeNET" id="2832"/>
<dbReference type="GeneCards" id="NPBWR2"/>
<dbReference type="HGNC" id="HGNC:4530">
    <property type="gene designation" value="NPBWR2"/>
</dbReference>
<dbReference type="HPA" id="ENSG00000125522">
    <property type="expression patterns" value="Not detected"/>
</dbReference>
<dbReference type="MIM" id="600731">
    <property type="type" value="gene"/>
</dbReference>
<dbReference type="neXtProt" id="NX_P48146"/>
<dbReference type="OpenTargets" id="ENSG00000125522"/>
<dbReference type="PharmGKB" id="PA28923"/>
<dbReference type="VEuPathDB" id="HostDB:ENSG00000125522"/>
<dbReference type="eggNOG" id="KOG3656">
    <property type="taxonomic scope" value="Eukaryota"/>
</dbReference>
<dbReference type="GeneTree" id="ENSGT00940000163127"/>
<dbReference type="HOGENOM" id="CLU_009579_8_1_1"/>
<dbReference type="InParanoid" id="P48146"/>
<dbReference type="OMA" id="IISFCVW"/>
<dbReference type="OrthoDB" id="6076970at2759"/>
<dbReference type="PAN-GO" id="P48146">
    <property type="GO annotations" value="5 GO annotations based on evolutionary models"/>
</dbReference>
<dbReference type="PhylomeDB" id="P48146"/>
<dbReference type="TreeFam" id="TF315737"/>
<dbReference type="PathwayCommons" id="P48146"/>
<dbReference type="Reactome" id="R-HSA-375276">
    <property type="pathway name" value="Peptide ligand-binding receptors"/>
</dbReference>
<dbReference type="Reactome" id="R-HSA-418594">
    <property type="pathway name" value="G alpha (i) signalling events"/>
</dbReference>
<dbReference type="SignaLink" id="P48146"/>
<dbReference type="BioGRID-ORCS" id="2832">
    <property type="hits" value="12 hits in 1147 CRISPR screens"/>
</dbReference>
<dbReference type="GeneWiki" id="Neuropeptides_B/W_receptor_2"/>
<dbReference type="GenomeRNAi" id="2832"/>
<dbReference type="Pharos" id="P48146">
    <property type="development level" value="Tbio"/>
</dbReference>
<dbReference type="PRO" id="PR:P48146"/>
<dbReference type="Proteomes" id="UP000005640">
    <property type="component" value="Chromosome 20"/>
</dbReference>
<dbReference type="RNAct" id="P48146">
    <property type="molecule type" value="protein"/>
</dbReference>
<dbReference type="Bgee" id="ENSG00000125522">
    <property type="expression patterns" value="Expressed in primary visual cortex and 11 other cell types or tissues"/>
</dbReference>
<dbReference type="GO" id="GO:0016020">
    <property type="term" value="C:membrane"/>
    <property type="evidence" value="ECO:0000305"/>
    <property type="project" value="HGNC-UCL"/>
</dbReference>
<dbReference type="GO" id="GO:0043005">
    <property type="term" value="C:neuron projection"/>
    <property type="evidence" value="ECO:0000318"/>
    <property type="project" value="GO_Central"/>
</dbReference>
<dbReference type="GO" id="GO:0005886">
    <property type="term" value="C:plasma membrane"/>
    <property type="evidence" value="ECO:0000318"/>
    <property type="project" value="GO_Central"/>
</dbReference>
<dbReference type="GO" id="GO:0004985">
    <property type="term" value="F:G protein-coupled opioid receptor activity"/>
    <property type="evidence" value="ECO:0000304"/>
    <property type="project" value="ProtInc"/>
</dbReference>
<dbReference type="GO" id="GO:0004930">
    <property type="term" value="F:G protein-coupled receptor activity"/>
    <property type="evidence" value="ECO:0000318"/>
    <property type="project" value="GO_Central"/>
</dbReference>
<dbReference type="GO" id="GO:0042923">
    <property type="term" value="F:neuropeptide binding"/>
    <property type="evidence" value="ECO:0000318"/>
    <property type="project" value="GO_Central"/>
</dbReference>
<dbReference type="GO" id="GO:0008188">
    <property type="term" value="F:neuropeptide receptor activity"/>
    <property type="evidence" value="ECO:0007669"/>
    <property type="project" value="InterPro"/>
</dbReference>
<dbReference type="GO" id="GO:0007186">
    <property type="term" value="P:G protein-coupled receptor signaling pathway"/>
    <property type="evidence" value="ECO:0000314"/>
    <property type="project" value="HGNC-UCL"/>
</dbReference>
<dbReference type="GO" id="GO:0007218">
    <property type="term" value="P:neuropeptide signaling pathway"/>
    <property type="evidence" value="ECO:0000318"/>
    <property type="project" value="GO_Central"/>
</dbReference>
<dbReference type="CDD" id="cd15087">
    <property type="entry name" value="7tmA_NPBWR"/>
    <property type="match status" value="1"/>
</dbReference>
<dbReference type="FunFam" id="1.20.1070.10:FF:000102">
    <property type="entry name" value="neuropeptides B/W receptor type 1"/>
    <property type="match status" value="1"/>
</dbReference>
<dbReference type="Gene3D" id="1.20.1070.10">
    <property type="entry name" value="Rhodopsin 7-helix transmembrane proteins"/>
    <property type="match status" value="1"/>
</dbReference>
<dbReference type="InterPro" id="IPR000276">
    <property type="entry name" value="GPCR_Rhodpsn"/>
</dbReference>
<dbReference type="InterPro" id="IPR017452">
    <property type="entry name" value="GPCR_Rhodpsn_7TM"/>
</dbReference>
<dbReference type="InterPro" id="IPR009150">
    <property type="entry name" value="Neuropept_B/W_rcpt"/>
</dbReference>
<dbReference type="PANTHER" id="PTHR24229:SF18">
    <property type="entry name" value="NEUROPEPTIDES B_W RECEPTOR TYPE 2"/>
    <property type="match status" value="1"/>
</dbReference>
<dbReference type="PANTHER" id="PTHR24229">
    <property type="entry name" value="NEUROPEPTIDES RECEPTOR"/>
    <property type="match status" value="1"/>
</dbReference>
<dbReference type="Pfam" id="PF00001">
    <property type="entry name" value="7tm_1"/>
    <property type="match status" value="1"/>
</dbReference>
<dbReference type="PRINTS" id="PR00237">
    <property type="entry name" value="GPCRRHODOPSN"/>
</dbReference>
<dbReference type="PRINTS" id="PR01855">
    <property type="entry name" value="NRPEPTIDEWR"/>
</dbReference>
<dbReference type="SMART" id="SM01381">
    <property type="entry name" value="7TM_GPCR_Srsx"/>
    <property type="match status" value="1"/>
</dbReference>
<dbReference type="SUPFAM" id="SSF81321">
    <property type="entry name" value="Family A G protein-coupled receptor-like"/>
    <property type="match status" value="1"/>
</dbReference>
<dbReference type="PROSITE" id="PS00237">
    <property type="entry name" value="G_PROTEIN_RECEP_F1_1"/>
    <property type="match status" value="1"/>
</dbReference>
<dbReference type="PROSITE" id="PS50262">
    <property type="entry name" value="G_PROTEIN_RECEP_F1_2"/>
    <property type="match status" value="1"/>
</dbReference>
<name>NPBW2_HUMAN</name>
<reference key="1">
    <citation type="journal article" date="1995" name="Genomics">
        <title>The cloning and chromosomal mapping of two novel human opioid-somatostatin-like receptor genes, GPR7 and GPR8, expressed in discrete areas of the brain.</title>
        <authorList>
            <person name="O'Dowd B.F."/>
            <person name="Scheideler M.A."/>
            <person name="Nguyen T."/>
            <person name="Cheng R."/>
            <person name="Rasmussen J.S."/>
            <person name="Marchese A."/>
            <person name="Zastawny R."/>
            <person name="Heng H.H.Q."/>
            <person name="Tsui L.-C."/>
            <person name="Shi X."/>
            <person name="Asa S."/>
            <person name="Puy L."/>
            <person name="George S.R."/>
        </authorList>
    </citation>
    <scope>NUCLEOTIDE SEQUENCE [GENOMIC DNA]</scope>
    <scope>VARIANT ARG-206</scope>
</reference>
<reference key="2">
    <citation type="journal article" date="2001" name="Nature">
        <title>The DNA sequence and comparative analysis of human chromosome 20.</title>
        <authorList>
            <person name="Deloukas P."/>
            <person name="Matthews L.H."/>
            <person name="Ashurst J.L."/>
            <person name="Burton J."/>
            <person name="Gilbert J.G.R."/>
            <person name="Jones M."/>
            <person name="Stavrides G."/>
            <person name="Almeida J.P."/>
            <person name="Babbage A.K."/>
            <person name="Bagguley C.L."/>
            <person name="Bailey J."/>
            <person name="Barlow K.F."/>
            <person name="Bates K.N."/>
            <person name="Beard L.M."/>
            <person name="Beare D.M."/>
            <person name="Beasley O.P."/>
            <person name="Bird C.P."/>
            <person name="Blakey S.E."/>
            <person name="Bridgeman A.M."/>
            <person name="Brown A.J."/>
            <person name="Buck D."/>
            <person name="Burrill W.D."/>
            <person name="Butler A.P."/>
            <person name="Carder C."/>
            <person name="Carter N.P."/>
            <person name="Chapman J.C."/>
            <person name="Clamp M."/>
            <person name="Clark G."/>
            <person name="Clark L.N."/>
            <person name="Clark S.Y."/>
            <person name="Clee C.M."/>
            <person name="Clegg S."/>
            <person name="Cobley V.E."/>
            <person name="Collier R.E."/>
            <person name="Connor R.E."/>
            <person name="Corby N.R."/>
            <person name="Coulson A."/>
            <person name="Coville G.J."/>
            <person name="Deadman R."/>
            <person name="Dhami P.D."/>
            <person name="Dunn M."/>
            <person name="Ellington A.G."/>
            <person name="Frankland J.A."/>
            <person name="Fraser A."/>
            <person name="French L."/>
            <person name="Garner P."/>
            <person name="Grafham D.V."/>
            <person name="Griffiths C."/>
            <person name="Griffiths M.N.D."/>
            <person name="Gwilliam R."/>
            <person name="Hall R.E."/>
            <person name="Hammond S."/>
            <person name="Harley J.L."/>
            <person name="Heath P.D."/>
            <person name="Ho S."/>
            <person name="Holden J.L."/>
            <person name="Howden P.J."/>
            <person name="Huckle E."/>
            <person name="Hunt A.R."/>
            <person name="Hunt S.E."/>
            <person name="Jekosch K."/>
            <person name="Johnson C.M."/>
            <person name="Johnson D."/>
            <person name="Kay M.P."/>
            <person name="Kimberley A.M."/>
            <person name="King A."/>
            <person name="Knights A."/>
            <person name="Laird G.K."/>
            <person name="Lawlor S."/>
            <person name="Lehvaeslaiho M.H."/>
            <person name="Leversha M.A."/>
            <person name="Lloyd C."/>
            <person name="Lloyd D.M."/>
            <person name="Lovell J.D."/>
            <person name="Marsh V.L."/>
            <person name="Martin S.L."/>
            <person name="McConnachie L.J."/>
            <person name="McLay K."/>
            <person name="McMurray A.A."/>
            <person name="Milne S.A."/>
            <person name="Mistry D."/>
            <person name="Moore M.J.F."/>
            <person name="Mullikin J.C."/>
            <person name="Nickerson T."/>
            <person name="Oliver K."/>
            <person name="Parker A."/>
            <person name="Patel R."/>
            <person name="Pearce T.A.V."/>
            <person name="Peck A.I."/>
            <person name="Phillimore B.J.C.T."/>
            <person name="Prathalingam S.R."/>
            <person name="Plumb R.W."/>
            <person name="Ramsay H."/>
            <person name="Rice C.M."/>
            <person name="Ross M.T."/>
            <person name="Scott C.E."/>
            <person name="Sehra H.K."/>
            <person name="Shownkeen R."/>
            <person name="Sims S."/>
            <person name="Skuce C.D."/>
            <person name="Smith M.L."/>
            <person name="Soderlund C."/>
            <person name="Steward C.A."/>
            <person name="Sulston J.E."/>
            <person name="Swann R.M."/>
            <person name="Sycamore N."/>
            <person name="Taylor R."/>
            <person name="Tee L."/>
            <person name="Thomas D.W."/>
            <person name="Thorpe A."/>
            <person name="Tracey A."/>
            <person name="Tromans A.C."/>
            <person name="Vaudin M."/>
            <person name="Wall M."/>
            <person name="Wallis J.M."/>
            <person name="Whitehead S.L."/>
            <person name="Whittaker P."/>
            <person name="Willey D.L."/>
            <person name="Williams L."/>
            <person name="Williams S.A."/>
            <person name="Wilming L."/>
            <person name="Wray P.W."/>
            <person name="Hubbard T."/>
            <person name="Durbin R.M."/>
            <person name="Bentley D.R."/>
            <person name="Beck S."/>
            <person name="Rogers J."/>
        </authorList>
    </citation>
    <scope>NUCLEOTIDE SEQUENCE [LARGE SCALE GENOMIC DNA]</scope>
</reference>
<reference key="3">
    <citation type="submission" date="2005-09" db="EMBL/GenBank/DDBJ databases">
        <authorList>
            <person name="Mural R.J."/>
            <person name="Istrail S."/>
            <person name="Sutton G.G."/>
            <person name="Florea L."/>
            <person name="Halpern A.L."/>
            <person name="Mobarry C.M."/>
            <person name="Lippert R."/>
            <person name="Walenz B."/>
            <person name="Shatkay H."/>
            <person name="Dew I."/>
            <person name="Miller J.R."/>
            <person name="Flanigan M.J."/>
            <person name="Edwards N.J."/>
            <person name="Bolanos R."/>
            <person name="Fasulo D."/>
            <person name="Halldorsson B.V."/>
            <person name="Hannenhalli S."/>
            <person name="Turner R."/>
            <person name="Yooseph S."/>
            <person name="Lu F."/>
            <person name="Nusskern D.R."/>
            <person name="Shue B.C."/>
            <person name="Zheng X.H."/>
            <person name="Zhong F."/>
            <person name="Delcher A.L."/>
            <person name="Huson D.H."/>
            <person name="Kravitz S.A."/>
            <person name="Mouchard L."/>
            <person name="Reinert K."/>
            <person name="Remington K.A."/>
            <person name="Clark A.G."/>
            <person name="Waterman M.S."/>
            <person name="Eichler E.E."/>
            <person name="Adams M.D."/>
            <person name="Hunkapiller M.W."/>
            <person name="Myers E.W."/>
            <person name="Venter J.C."/>
        </authorList>
    </citation>
    <scope>NUCLEOTIDE SEQUENCE [LARGE SCALE GENOMIC DNA]</scope>
</reference>
<reference key="4">
    <citation type="journal article" date="2004" name="Genome Res.">
        <title>The status, quality, and expansion of the NIH full-length cDNA project: the Mammalian Gene Collection (MGC).</title>
        <authorList>
            <consortium name="The MGC Project Team"/>
        </authorList>
    </citation>
    <scope>NUCLEOTIDE SEQUENCE [LARGE SCALE MRNA]</scope>
</reference>
<reference key="5">
    <citation type="journal article" date="2003" name="J. Biol. Chem.">
        <title>Identification of natural ligands for the orphan G protein-coupled receptors GPR7 and GPR8.</title>
        <authorList>
            <person name="Brezillon S."/>
            <person name="Lannoy V."/>
            <person name="Franssen J.-D."/>
            <person name="Le Poul E."/>
            <person name="Dupriez V."/>
            <person name="Lucchetti J."/>
            <person name="Detheux M."/>
            <person name="Parmentier M."/>
        </authorList>
    </citation>
    <scope>TISSUE SPECIFICITY</scope>
    <scope>INTERACTION WITH NEUROPEPTIDES B AND W</scope>
</reference>
<reference key="6">
    <citation type="journal article" date="2003" name="Proc. Natl. Acad. Sci. U.S.A.">
        <title>Characterization of a family of endogenous neuropeptide ligands for the G protein-coupled receptors GPR7 and GPR8.</title>
        <authorList>
            <person name="Tanaka H."/>
            <person name="Yoshida T."/>
            <person name="Miyamoto N."/>
            <person name="Motoike T."/>
            <person name="Kurosu H."/>
            <person name="Shibata K."/>
            <person name="Yamanaka A."/>
            <person name="Williams S.C."/>
            <person name="Richardson J.A."/>
            <person name="Tsujino N."/>
            <person name="Garry M.G."/>
            <person name="Lerner M.R."/>
            <person name="King D.S."/>
            <person name="O'Dowd B.F."/>
            <person name="Sakurai T."/>
            <person name="Yanagisawa M."/>
        </authorList>
    </citation>
    <scope>INTERACTION WITH NEUROPEPTIDES B AND W</scope>
</reference>
<reference key="7">
    <citation type="journal article" date="1998" name="Hum. Mutat.">
        <title>Identification of a novel amino acid substitution (R206Q) in the second extracellular loop of the opioid-somatostatin-like receptor gene GPR8.</title>
        <authorList>
            <person name="Zeng J."/>
            <person name="Liu M."/>
            <person name="Grau O."/>
            <person name="Capron A."/>
            <person name="Bahr G.M."/>
        </authorList>
    </citation>
    <scope>VARIANT ARG-206</scope>
</reference>
<reference key="8">
    <citation type="journal article" date="2006" name="Science">
        <title>The consensus coding sequences of human breast and colorectal cancers.</title>
        <authorList>
            <person name="Sjoeblom T."/>
            <person name="Jones S."/>
            <person name="Wood L.D."/>
            <person name="Parsons D.W."/>
            <person name="Lin J."/>
            <person name="Barber T.D."/>
            <person name="Mandelker D."/>
            <person name="Leary R.J."/>
            <person name="Ptak J."/>
            <person name="Silliman N."/>
            <person name="Szabo S."/>
            <person name="Buckhaults P."/>
            <person name="Farrell C."/>
            <person name="Meeh P."/>
            <person name="Markowitz S.D."/>
            <person name="Willis J."/>
            <person name="Dawson D."/>
            <person name="Willson J.K.V."/>
            <person name="Gazdar A.F."/>
            <person name="Hartigan J."/>
            <person name="Wu L."/>
            <person name="Liu C."/>
            <person name="Parmigiani G."/>
            <person name="Park B.H."/>
            <person name="Bachman K.E."/>
            <person name="Papadopoulos N."/>
            <person name="Vogelstein B."/>
            <person name="Kinzler K.W."/>
            <person name="Velculescu V.E."/>
        </authorList>
    </citation>
    <scope>VARIANT [LARGE SCALE ANALYSIS] ARG-92</scope>
</reference>
<keyword id="KW-1003">Cell membrane</keyword>
<keyword id="KW-1015">Disulfide bond</keyword>
<keyword id="KW-0297">G-protein coupled receptor</keyword>
<keyword id="KW-0325">Glycoprotein</keyword>
<keyword id="KW-0449">Lipoprotein</keyword>
<keyword id="KW-0472">Membrane</keyword>
<keyword id="KW-0564">Palmitate</keyword>
<keyword id="KW-0675">Receptor</keyword>
<keyword id="KW-1185">Reference proteome</keyword>
<keyword id="KW-0807">Transducer</keyword>
<keyword id="KW-0812">Transmembrane</keyword>
<keyword id="KW-1133">Transmembrane helix</keyword>
<feature type="chain" id="PRO_0000069522" description="Neuropeptides B/W receptor type 2">
    <location>
        <begin position="1"/>
        <end position="333"/>
    </location>
</feature>
<feature type="topological domain" description="Extracellular" evidence="1">
    <location>
        <begin position="1"/>
        <end position="45"/>
    </location>
</feature>
<feature type="transmembrane region" description="Helical; Name=1" evidence="1">
    <location>
        <begin position="46"/>
        <end position="69"/>
    </location>
</feature>
<feature type="topological domain" description="Cytoplasmic" evidence="1">
    <location>
        <begin position="70"/>
        <end position="80"/>
    </location>
</feature>
<feature type="transmembrane region" description="Helical; Name=2" evidence="1">
    <location>
        <begin position="81"/>
        <end position="105"/>
    </location>
</feature>
<feature type="topological domain" description="Extracellular" evidence="1">
    <location>
        <begin position="106"/>
        <end position="120"/>
    </location>
</feature>
<feature type="transmembrane region" description="Helical; Name=3" evidence="1">
    <location>
        <begin position="121"/>
        <end position="140"/>
    </location>
</feature>
<feature type="topological domain" description="Cytoplasmic" evidence="1">
    <location>
        <begin position="141"/>
        <end position="165"/>
    </location>
</feature>
<feature type="transmembrane region" description="Helical; Name=4" evidence="1">
    <location>
        <begin position="166"/>
        <end position="185"/>
    </location>
</feature>
<feature type="topological domain" description="Extracellular" evidence="1">
    <location>
        <begin position="186"/>
        <end position="211"/>
    </location>
</feature>
<feature type="transmembrane region" description="Helical; Name=5" evidence="1">
    <location>
        <begin position="212"/>
        <end position="233"/>
    </location>
</feature>
<feature type="topological domain" description="Cytoplasmic" evidence="1">
    <location>
        <begin position="234"/>
        <end position="257"/>
    </location>
</feature>
<feature type="transmembrane region" description="Helical; Name=6" evidence="1">
    <location>
        <begin position="258"/>
        <end position="282"/>
    </location>
</feature>
<feature type="topological domain" description="Extracellular" evidence="1">
    <location>
        <begin position="283"/>
        <end position="292"/>
    </location>
</feature>
<feature type="transmembrane region" description="Helical; Name=7" evidence="1">
    <location>
        <begin position="293"/>
        <end position="307"/>
    </location>
</feature>
<feature type="topological domain" description="Cytoplasmic" evidence="1">
    <location>
        <begin position="308"/>
        <end position="333"/>
    </location>
</feature>
<feature type="glycosylation site" description="N-linked (GlcNAc...) asparagine" evidence="1">
    <location>
        <position position="24"/>
    </location>
</feature>
<feature type="glycosylation site" description="N-linked (GlcNAc...) asparagine" evidence="1">
    <location>
        <position position="29"/>
    </location>
</feature>
<feature type="glycosylation site" description="N-linked (GlcNAc...) asparagine" evidence="1">
    <location>
        <position position="34"/>
    </location>
</feature>
<feature type="disulfide bond" evidence="2">
    <location>
        <begin position="117"/>
        <end position="197"/>
    </location>
</feature>
<feature type="sequence variant" id="VAR_035766" description="In a colorectal cancer sample; somatic mutation; dbSNP:rs768724424." evidence="4">
    <original>G</original>
    <variation>R</variation>
    <location>
        <position position="92"/>
    </location>
</feature>
<feature type="sequence variant" id="VAR_003579" description="In dbSNP:rs4809401." evidence="5 6">
    <original>Q</original>
    <variation>R</variation>
    <location>
        <position position="206"/>
    </location>
</feature>
<feature type="sequence conflict" description="In Ref. 1; AAC50198." evidence="7" ref="1">
    <original>S</original>
    <variation>T</variation>
    <location>
        <position position="305"/>
    </location>
</feature>
<evidence type="ECO:0000255" key="1"/>
<evidence type="ECO:0000255" key="2">
    <source>
        <dbReference type="PROSITE-ProRule" id="PRU00521"/>
    </source>
</evidence>
<evidence type="ECO:0000269" key="3">
    <source>
    </source>
</evidence>
<evidence type="ECO:0000269" key="4">
    <source>
    </source>
</evidence>
<evidence type="ECO:0000269" key="5">
    <source>
    </source>
</evidence>
<evidence type="ECO:0000269" key="6">
    <source ref="7"/>
</evidence>
<evidence type="ECO:0000305" key="7"/>
<comment type="function">
    <text>Interacts specifically with a number of opioid ligands. Receptor for neuropeptides B and W, which may be involved in neuroendocrine system regulation, food intake and the organization of other signals.</text>
</comment>
<comment type="interaction">
    <interactant intactId="EBI-10210114">
        <id>P48146</id>
    </interactant>
    <interactant intactId="EBI-998198">
        <id>Q8N9W6</id>
        <label>BOLL</label>
    </interactant>
    <organismsDiffer>false</organismsDiffer>
    <experiments>3</experiments>
</comment>
<comment type="interaction">
    <interactant intactId="EBI-10210114">
        <id>P48146</id>
    </interactant>
    <interactant intactId="EBI-3867333">
        <id>A8MQ03</id>
        <label>CYSRT1</label>
    </interactant>
    <organismsDiffer>false</organismsDiffer>
    <experiments>3</experiments>
</comment>
<comment type="interaction">
    <interactant intactId="EBI-10210114">
        <id>P48146</id>
    </interactant>
    <interactant intactId="EBI-10981970">
        <id>Q5T749</id>
        <label>KPRP</label>
    </interactant>
    <organismsDiffer>false</organismsDiffer>
    <experiments>3</experiments>
</comment>
<comment type="interaction">
    <interactant intactId="EBI-10210114">
        <id>P48146</id>
    </interactant>
    <interactant intactId="EBI-948001">
        <id>Q15323</id>
        <label>KRT31</label>
    </interactant>
    <organismsDiffer>false</organismsDiffer>
    <experiments>6</experiments>
</comment>
<comment type="interaction">
    <interactant intactId="EBI-10210114">
        <id>P48146</id>
    </interactant>
    <interactant intactId="EBI-1047093">
        <id>O76011</id>
        <label>KRT34</label>
    </interactant>
    <organismsDiffer>false</organismsDiffer>
    <experiments>3</experiments>
</comment>
<comment type="interaction">
    <interactant intactId="EBI-10210114">
        <id>P48146</id>
    </interactant>
    <interactant intactId="EBI-10171697">
        <id>Q6A162</id>
        <label>KRT40</label>
    </interactant>
    <organismsDiffer>false</organismsDiffer>
    <experiments>3</experiments>
</comment>
<comment type="interaction">
    <interactant intactId="EBI-10210114">
        <id>P48146</id>
    </interactant>
    <interactant intactId="EBI-11749135">
        <id>Q8IUG1</id>
        <label>KRTAP1-3</label>
    </interactant>
    <organismsDiffer>false</organismsDiffer>
    <experiments>3</experiments>
</comment>
<comment type="interaction">
    <interactant intactId="EBI-10210114">
        <id>P48146</id>
    </interactant>
    <interactant intactId="EBI-10172290">
        <id>P60409</id>
        <label>KRTAP10-7</label>
    </interactant>
    <organismsDiffer>false</organismsDiffer>
    <experiments>3</experiments>
</comment>
<comment type="interaction">
    <interactant intactId="EBI-10210114">
        <id>P48146</id>
    </interactant>
    <interactant intactId="EBI-10172052">
        <id>P60411</id>
        <label>KRTAP10-9</label>
    </interactant>
    <organismsDiffer>false</organismsDiffer>
    <experiments>3</experiments>
</comment>
<comment type="interaction">
    <interactant intactId="EBI-10210114">
        <id>P48146</id>
    </interactant>
    <interactant intactId="EBI-3958099">
        <id>P26371</id>
        <label>KRTAP5-9</label>
    </interactant>
    <organismsDiffer>false</organismsDiffer>
    <experiments>3</experiments>
</comment>
<comment type="interaction">
    <interactant intactId="EBI-10210114">
        <id>P48146</id>
    </interactant>
    <interactant intactId="EBI-11962084">
        <id>Q3LI66</id>
        <label>KRTAP6-2</label>
    </interactant>
    <organismsDiffer>false</organismsDiffer>
    <experiments>3</experiments>
</comment>
<comment type="interaction">
    <interactant intactId="EBI-10210114">
        <id>P48146</id>
    </interactant>
    <interactant intactId="EBI-945833">
        <id>Q7Z3S9</id>
        <label>NOTCH2NLA</label>
    </interactant>
    <organismsDiffer>false</organismsDiffer>
    <experiments>3</experiments>
</comment>
<comment type="interaction">
    <interactant intactId="EBI-10210114">
        <id>P48146</id>
    </interactant>
    <interactant intactId="EBI-946080">
        <id>Q9BSU1</id>
        <label>PHAF1</label>
    </interactant>
    <organismsDiffer>false</organismsDiffer>
    <experiments>3</experiments>
</comment>
<comment type="interaction">
    <interactant intactId="EBI-10210114">
        <id>P48146</id>
    </interactant>
    <interactant intactId="EBI-302345">
        <id>Q8ND90</id>
        <label>PNMA1</label>
    </interactant>
    <organismsDiffer>false</organismsDiffer>
    <experiments>3</experiments>
</comment>
<comment type="interaction">
    <interactant intactId="EBI-10210114">
        <id>P48146</id>
    </interactant>
    <interactant intactId="EBI-348380">
        <id>P25788</id>
        <label>PSMA3</label>
    </interactant>
    <organismsDiffer>false</organismsDiffer>
    <experiments>3</experiments>
</comment>
<comment type="subcellular location">
    <subcellularLocation>
        <location>Cell membrane</location>
        <topology>Multi-pass membrane protein</topology>
    </subcellularLocation>
</comment>
<comment type="tissue specificity">
    <text evidence="3">Detected at high levels in caudate nucleus, hippocampus and amygdala; at moderate levels in the adult brain, thalamus, parietal cortex, pituitary gland, adrenal gland and lymph nodes.</text>
</comment>
<comment type="similarity">
    <text evidence="2">Belongs to the G-protein coupled receptor 1 family.</text>
</comment>